<protein>
    <recommendedName>
        <fullName>F-box/FBD/LRR-repeat protein At4g00160</fullName>
    </recommendedName>
</protein>
<proteinExistence type="evidence at transcript level"/>
<accession>Q8LF09</accession>
<accession>O81317</accession>
<organism>
    <name type="scientific">Arabidopsis thaliana</name>
    <name type="common">Mouse-ear cress</name>
    <dbReference type="NCBI Taxonomy" id="3702"/>
    <lineage>
        <taxon>Eukaryota</taxon>
        <taxon>Viridiplantae</taxon>
        <taxon>Streptophyta</taxon>
        <taxon>Embryophyta</taxon>
        <taxon>Tracheophyta</taxon>
        <taxon>Spermatophyta</taxon>
        <taxon>Magnoliopsida</taxon>
        <taxon>eudicotyledons</taxon>
        <taxon>Gunneridae</taxon>
        <taxon>Pentapetalae</taxon>
        <taxon>rosids</taxon>
        <taxon>malvids</taxon>
        <taxon>Brassicales</taxon>
        <taxon>Brassicaceae</taxon>
        <taxon>Camelineae</taxon>
        <taxon>Arabidopsis</taxon>
    </lineage>
</organism>
<feature type="chain" id="PRO_0000283116" description="F-box/FBD/LRR-repeat protein At4g00160">
    <location>
        <begin position="1"/>
        <end position="453"/>
    </location>
</feature>
<feature type="domain" description="F-box" evidence="1">
    <location>
        <begin position="15"/>
        <end position="68"/>
    </location>
</feature>
<feature type="repeat" description="LRR 1">
    <location>
        <begin position="89"/>
        <end position="111"/>
    </location>
</feature>
<feature type="repeat" description="LRR 2">
    <location>
        <begin position="165"/>
        <end position="190"/>
    </location>
</feature>
<feature type="repeat" description="LRR 3">
    <location>
        <begin position="215"/>
        <end position="239"/>
    </location>
</feature>
<feature type="repeat" description="LRR 4">
    <location>
        <begin position="247"/>
        <end position="270"/>
    </location>
</feature>
<feature type="repeat" description="LRR 5">
    <location>
        <begin position="282"/>
        <end position="307"/>
    </location>
</feature>
<feature type="repeat" description="LRR 6">
    <location>
        <begin position="331"/>
        <end position="358"/>
    </location>
</feature>
<feature type="domain" description="FBD">
    <location>
        <begin position="355"/>
        <end position="406"/>
    </location>
</feature>
<sequence length="453" mass="52063">MEQGESLRIRVVMGKDRISELPDALLIKILSFLPTKIVVATSVFSKQWRPLWKLVPNLEFDSEDYDDKEQYTFSEIVCKSFLSHKAPVLESFRLEFESEKVDPVDIGLWVGIAFSRHLRELVLVAADTGTGTAFKFPSSLCTCNTLETLRLVLLILVDISSPVVMKSLRTLHLELVSYKDESSIRNLLSGCPILEELLVIRGEDSDIEVFTIDEVPSLKRLTINDDHDGQEFWGYVINAPSLKYLLIEDLRCPGFCLNAPELMEANIFDGTSITNDNFLGYLTSVKRLLLNLSPWKITYPTGSIFYQLVSLEMYTREIDWWDLLTLMLEHSPKLQVLKLTDNCVKFHKNGLPGGKWNEPKYVPECLLSHLETFVWRRFDWGREEEKEIATYILKNARRLNKATFSTNPVNSEELDKLKERRKVHNELDGVVRASNSCQFVFKFDTSYHVSDSS</sequence>
<comment type="sequence caution" evidence="2">
    <conflict type="erroneous gene model prediction">
        <sequence resource="EMBL-CDS" id="AAC19303"/>
    </conflict>
</comment>
<comment type="sequence caution" evidence="2">
    <conflict type="erroneous initiation">
        <sequence resource="EMBL-CDS" id="AAM61661"/>
    </conflict>
    <text>Truncated N-terminus.</text>
</comment>
<comment type="sequence caution" evidence="2">
    <conflict type="erroneous gene model prediction">
        <sequence resource="EMBL-CDS" id="CAB80774"/>
    </conflict>
</comment>
<evidence type="ECO:0000255" key="1">
    <source>
        <dbReference type="PROSITE-ProRule" id="PRU00080"/>
    </source>
</evidence>
<evidence type="ECO:0000305" key="2"/>
<reference key="1">
    <citation type="journal article" date="1999" name="Nature">
        <title>Sequence and analysis of chromosome 4 of the plant Arabidopsis thaliana.</title>
        <authorList>
            <person name="Mayer K.F.X."/>
            <person name="Schueller C."/>
            <person name="Wambutt R."/>
            <person name="Murphy G."/>
            <person name="Volckaert G."/>
            <person name="Pohl T."/>
            <person name="Duesterhoeft A."/>
            <person name="Stiekema W."/>
            <person name="Entian K.-D."/>
            <person name="Terryn N."/>
            <person name="Harris B."/>
            <person name="Ansorge W."/>
            <person name="Brandt P."/>
            <person name="Grivell L.A."/>
            <person name="Rieger M."/>
            <person name="Weichselgartner M."/>
            <person name="de Simone V."/>
            <person name="Obermaier B."/>
            <person name="Mache R."/>
            <person name="Mueller M."/>
            <person name="Kreis M."/>
            <person name="Delseny M."/>
            <person name="Puigdomenech P."/>
            <person name="Watson M."/>
            <person name="Schmidtheini T."/>
            <person name="Reichert B."/>
            <person name="Portetelle D."/>
            <person name="Perez-Alonso M."/>
            <person name="Boutry M."/>
            <person name="Bancroft I."/>
            <person name="Vos P."/>
            <person name="Hoheisel J."/>
            <person name="Zimmermann W."/>
            <person name="Wedler H."/>
            <person name="Ridley P."/>
            <person name="Langham S.-A."/>
            <person name="McCullagh B."/>
            <person name="Bilham L."/>
            <person name="Robben J."/>
            <person name="van der Schueren J."/>
            <person name="Grymonprez B."/>
            <person name="Chuang Y.-J."/>
            <person name="Vandenbussche F."/>
            <person name="Braeken M."/>
            <person name="Weltjens I."/>
            <person name="Voet M."/>
            <person name="Bastiaens I."/>
            <person name="Aert R."/>
            <person name="Defoor E."/>
            <person name="Weitzenegger T."/>
            <person name="Bothe G."/>
            <person name="Ramsperger U."/>
            <person name="Hilbert H."/>
            <person name="Braun M."/>
            <person name="Holzer E."/>
            <person name="Brandt A."/>
            <person name="Peters S."/>
            <person name="van Staveren M."/>
            <person name="Dirkse W."/>
            <person name="Mooijman P."/>
            <person name="Klein Lankhorst R."/>
            <person name="Rose M."/>
            <person name="Hauf J."/>
            <person name="Koetter P."/>
            <person name="Berneiser S."/>
            <person name="Hempel S."/>
            <person name="Feldpausch M."/>
            <person name="Lamberth S."/>
            <person name="Van den Daele H."/>
            <person name="De Keyser A."/>
            <person name="Buysshaert C."/>
            <person name="Gielen J."/>
            <person name="Villarroel R."/>
            <person name="De Clercq R."/>
            <person name="van Montagu M."/>
            <person name="Rogers J."/>
            <person name="Cronin A."/>
            <person name="Quail M.A."/>
            <person name="Bray-Allen S."/>
            <person name="Clark L."/>
            <person name="Doggett J."/>
            <person name="Hall S."/>
            <person name="Kay M."/>
            <person name="Lennard N."/>
            <person name="McLay K."/>
            <person name="Mayes R."/>
            <person name="Pettett A."/>
            <person name="Rajandream M.A."/>
            <person name="Lyne M."/>
            <person name="Benes V."/>
            <person name="Rechmann S."/>
            <person name="Borkova D."/>
            <person name="Bloecker H."/>
            <person name="Scharfe M."/>
            <person name="Grimm M."/>
            <person name="Loehnert T.-H."/>
            <person name="Dose S."/>
            <person name="de Haan M."/>
            <person name="Maarse A.C."/>
            <person name="Schaefer M."/>
            <person name="Mueller-Auer S."/>
            <person name="Gabel C."/>
            <person name="Fuchs M."/>
            <person name="Fartmann B."/>
            <person name="Granderath K."/>
            <person name="Dauner D."/>
            <person name="Herzl A."/>
            <person name="Neumann S."/>
            <person name="Argiriou A."/>
            <person name="Vitale D."/>
            <person name="Liguori R."/>
            <person name="Piravandi E."/>
            <person name="Massenet O."/>
            <person name="Quigley F."/>
            <person name="Clabauld G."/>
            <person name="Muendlein A."/>
            <person name="Felber R."/>
            <person name="Schnabl S."/>
            <person name="Hiller R."/>
            <person name="Schmidt W."/>
            <person name="Lecharny A."/>
            <person name="Aubourg S."/>
            <person name="Chefdor F."/>
            <person name="Cooke R."/>
            <person name="Berger C."/>
            <person name="Monfort A."/>
            <person name="Casacuberta E."/>
            <person name="Gibbons T."/>
            <person name="Weber N."/>
            <person name="Vandenbol M."/>
            <person name="Bargues M."/>
            <person name="Terol J."/>
            <person name="Torres A."/>
            <person name="Perez-Perez A."/>
            <person name="Purnelle B."/>
            <person name="Bent E."/>
            <person name="Johnson S."/>
            <person name="Tacon D."/>
            <person name="Jesse T."/>
            <person name="Heijnen L."/>
            <person name="Schwarz S."/>
            <person name="Scholler P."/>
            <person name="Heber S."/>
            <person name="Francs P."/>
            <person name="Bielke C."/>
            <person name="Frishman D."/>
            <person name="Haase D."/>
            <person name="Lemcke K."/>
            <person name="Mewes H.-W."/>
            <person name="Stocker S."/>
            <person name="Zaccaria P."/>
            <person name="Bevan M."/>
            <person name="Wilson R.K."/>
            <person name="de la Bastide M."/>
            <person name="Habermann K."/>
            <person name="Parnell L."/>
            <person name="Dedhia N."/>
            <person name="Gnoj L."/>
            <person name="Schutz K."/>
            <person name="Huang E."/>
            <person name="Spiegel L."/>
            <person name="Sekhon M."/>
            <person name="Murray J."/>
            <person name="Sheet P."/>
            <person name="Cordes M."/>
            <person name="Abu-Threideh J."/>
            <person name="Stoneking T."/>
            <person name="Kalicki J."/>
            <person name="Graves T."/>
            <person name="Harmon G."/>
            <person name="Edwards J."/>
            <person name="Latreille P."/>
            <person name="Courtney L."/>
            <person name="Cloud J."/>
            <person name="Abbott A."/>
            <person name="Scott K."/>
            <person name="Johnson D."/>
            <person name="Minx P."/>
            <person name="Bentley D."/>
            <person name="Fulton B."/>
            <person name="Miller N."/>
            <person name="Greco T."/>
            <person name="Kemp K."/>
            <person name="Kramer J."/>
            <person name="Fulton L."/>
            <person name="Mardis E."/>
            <person name="Dante M."/>
            <person name="Pepin K."/>
            <person name="Hillier L.W."/>
            <person name="Nelson J."/>
            <person name="Spieth J."/>
            <person name="Ryan E."/>
            <person name="Andrews S."/>
            <person name="Geisel C."/>
            <person name="Layman D."/>
            <person name="Du H."/>
            <person name="Ali J."/>
            <person name="Berghoff A."/>
            <person name="Jones K."/>
            <person name="Drone K."/>
            <person name="Cotton M."/>
            <person name="Joshu C."/>
            <person name="Antonoiu B."/>
            <person name="Zidanic M."/>
            <person name="Strong C."/>
            <person name="Sun H."/>
            <person name="Lamar B."/>
            <person name="Yordan C."/>
            <person name="Ma P."/>
            <person name="Zhong J."/>
            <person name="Preston R."/>
            <person name="Vil D."/>
            <person name="Shekher M."/>
            <person name="Matero A."/>
            <person name="Shah R."/>
            <person name="Swaby I.K."/>
            <person name="O'Shaughnessy A."/>
            <person name="Rodriguez M."/>
            <person name="Hoffman J."/>
            <person name="Till S."/>
            <person name="Granat S."/>
            <person name="Shohdy N."/>
            <person name="Hasegawa A."/>
            <person name="Hameed A."/>
            <person name="Lodhi M."/>
            <person name="Johnson A."/>
            <person name="Chen E."/>
            <person name="Marra M.A."/>
            <person name="Martienssen R."/>
            <person name="McCombie W.R."/>
        </authorList>
    </citation>
    <scope>NUCLEOTIDE SEQUENCE [LARGE SCALE GENOMIC DNA]</scope>
    <source>
        <strain>cv. Columbia</strain>
    </source>
</reference>
<reference key="2">
    <citation type="journal article" date="2017" name="Plant J.">
        <title>Araport11: a complete reannotation of the Arabidopsis thaliana reference genome.</title>
        <authorList>
            <person name="Cheng C.Y."/>
            <person name="Krishnakumar V."/>
            <person name="Chan A.P."/>
            <person name="Thibaud-Nissen F."/>
            <person name="Schobel S."/>
            <person name="Town C.D."/>
        </authorList>
    </citation>
    <scope>GENOME REANNOTATION</scope>
    <source>
        <strain>cv. Columbia</strain>
    </source>
</reference>
<reference key="3">
    <citation type="submission" date="2002-03" db="EMBL/GenBank/DDBJ databases">
        <title>Full-length cDNA from Arabidopsis thaliana.</title>
        <authorList>
            <person name="Brover V.V."/>
            <person name="Troukhan M.E."/>
            <person name="Alexandrov N.A."/>
            <person name="Lu Y.-P."/>
            <person name="Flavell R.B."/>
            <person name="Feldmann K.A."/>
        </authorList>
    </citation>
    <scope>NUCLEOTIDE SEQUENCE [LARGE SCALE MRNA]</scope>
</reference>
<dbReference type="EMBL" id="AF069299">
    <property type="protein sequence ID" value="AAC19303.1"/>
    <property type="status" value="ALT_SEQ"/>
    <property type="molecule type" value="Genomic_DNA"/>
</dbReference>
<dbReference type="EMBL" id="AL161471">
    <property type="protein sequence ID" value="CAB80774.1"/>
    <property type="status" value="ALT_SEQ"/>
    <property type="molecule type" value="Genomic_DNA"/>
</dbReference>
<dbReference type="EMBL" id="CP002687">
    <property type="protein sequence ID" value="AEE81830.1"/>
    <property type="molecule type" value="Genomic_DNA"/>
</dbReference>
<dbReference type="EMBL" id="AY085107">
    <property type="protein sequence ID" value="AAM61661.1"/>
    <property type="status" value="ALT_INIT"/>
    <property type="molecule type" value="mRNA"/>
</dbReference>
<dbReference type="PIR" id="T01344">
    <property type="entry name" value="T01344"/>
</dbReference>
<dbReference type="RefSeq" id="NP_567152.1">
    <property type="nucleotide sequence ID" value="NM_116233.2"/>
</dbReference>
<dbReference type="FunCoup" id="Q8LF09">
    <property type="interactions" value="385"/>
</dbReference>
<dbReference type="PaxDb" id="3702-AT4G00160.1"/>
<dbReference type="EnsemblPlants" id="AT4G00160.1">
    <property type="protein sequence ID" value="AT4G00160.1"/>
    <property type="gene ID" value="AT4G00160"/>
</dbReference>
<dbReference type="GeneID" id="828180"/>
<dbReference type="Gramene" id="AT4G00160.1">
    <property type="protein sequence ID" value="AT4G00160.1"/>
    <property type="gene ID" value="AT4G00160"/>
</dbReference>
<dbReference type="KEGG" id="ath:AT4G00160"/>
<dbReference type="Araport" id="AT4G00160"/>
<dbReference type="TAIR" id="AT4G00160"/>
<dbReference type="HOGENOM" id="CLU_010721_1_2_1"/>
<dbReference type="InParanoid" id="Q8LF09"/>
<dbReference type="OMA" id="LIRANIC"/>
<dbReference type="PRO" id="PR:Q8LF09"/>
<dbReference type="Proteomes" id="UP000006548">
    <property type="component" value="Chromosome 4"/>
</dbReference>
<dbReference type="ExpressionAtlas" id="Q8LF09">
    <property type="expression patterns" value="baseline and differential"/>
</dbReference>
<dbReference type="CDD" id="cd22160">
    <property type="entry name" value="F-box_AtFBL13-like"/>
    <property type="match status" value="1"/>
</dbReference>
<dbReference type="Gene3D" id="1.20.1280.50">
    <property type="match status" value="1"/>
</dbReference>
<dbReference type="Gene3D" id="3.80.10.10">
    <property type="entry name" value="Ribonuclease Inhibitor"/>
    <property type="match status" value="1"/>
</dbReference>
<dbReference type="InterPro" id="IPR036047">
    <property type="entry name" value="F-box-like_dom_sf"/>
</dbReference>
<dbReference type="InterPro" id="IPR053781">
    <property type="entry name" value="F-box_AtFBL13-like"/>
</dbReference>
<dbReference type="InterPro" id="IPR001810">
    <property type="entry name" value="F-box_dom"/>
</dbReference>
<dbReference type="InterPro" id="IPR006566">
    <property type="entry name" value="FBD"/>
</dbReference>
<dbReference type="InterPro" id="IPR050232">
    <property type="entry name" value="FBL13/AtMIF1-like"/>
</dbReference>
<dbReference type="InterPro" id="IPR032675">
    <property type="entry name" value="LRR_dom_sf"/>
</dbReference>
<dbReference type="InterPro" id="IPR055411">
    <property type="entry name" value="LRR_FXL15/At3g58940/PEG3-like"/>
</dbReference>
<dbReference type="PANTHER" id="PTHR31900:SF34">
    <property type="entry name" value="EMB|CAB62440.1-RELATED"/>
    <property type="match status" value="1"/>
</dbReference>
<dbReference type="PANTHER" id="PTHR31900">
    <property type="entry name" value="F-BOX/RNI SUPERFAMILY PROTEIN-RELATED"/>
    <property type="match status" value="1"/>
</dbReference>
<dbReference type="Pfam" id="PF00646">
    <property type="entry name" value="F-box"/>
    <property type="match status" value="1"/>
</dbReference>
<dbReference type="Pfam" id="PF08387">
    <property type="entry name" value="FBD"/>
    <property type="match status" value="1"/>
</dbReference>
<dbReference type="Pfam" id="PF24758">
    <property type="entry name" value="LRR_At5g56370"/>
    <property type="match status" value="1"/>
</dbReference>
<dbReference type="SMART" id="SM00579">
    <property type="entry name" value="FBD"/>
    <property type="match status" value="1"/>
</dbReference>
<dbReference type="SUPFAM" id="SSF81383">
    <property type="entry name" value="F-box domain"/>
    <property type="match status" value="1"/>
</dbReference>
<dbReference type="SUPFAM" id="SSF52047">
    <property type="entry name" value="RNI-like"/>
    <property type="match status" value="1"/>
</dbReference>
<dbReference type="PROSITE" id="PS50181">
    <property type="entry name" value="FBOX"/>
    <property type="match status" value="1"/>
</dbReference>
<name>FDL23_ARATH</name>
<keyword id="KW-0433">Leucine-rich repeat</keyword>
<keyword id="KW-1185">Reference proteome</keyword>
<keyword id="KW-0677">Repeat</keyword>
<gene>
    <name type="ordered locus">At4g00160</name>
    <name type="ORF">F6N15.5</name>
</gene>